<organism>
    <name type="scientific">Escherichia coli (strain K12)</name>
    <dbReference type="NCBI Taxonomy" id="83333"/>
    <lineage>
        <taxon>Bacteria</taxon>
        <taxon>Pseudomonadati</taxon>
        <taxon>Pseudomonadota</taxon>
        <taxon>Gammaproteobacteria</taxon>
        <taxon>Enterobacterales</taxon>
        <taxon>Enterobacteriaceae</taxon>
        <taxon>Escherichia</taxon>
    </lineage>
</organism>
<proteinExistence type="inferred from homology"/>
<name>ECNB_ECOLI</name>
<evidence type="ECO:0000255" key="1">
    <source>
        <dbReference type="PROSITE-ProRule" id="PRU00303"/>
    </source>
</evidence>
<evidence type="ECO:0000305" key="2"/>
<comment type="function">
    <text>Plays a role in the bacteriolysis. Is activated under conditions of high osmolarity by the factor sigma S. Entericidin A functions as an antidote.</text>
</comment>
<comment type="subcellular location">
    <subcellularLocation>
        <location>Cell membrane</location>
        <topology>Lipid-anchor</topology>
    </subcellularLocation>
</comment>
<comment type="similarity">
    <text evidence="2">Belongs to the EcnA/EcnB lipoprotein family.</text>
</comment>
<protein>
    <recommendedName>
        <fullName>Entericidin B</fullName>
    </recommendedName>
</protein>
<keyword id="KW-1003">Cell membrane</keyword>
<keyword id="KW-0449">Lipoprotein</keyword>
<keyword id="KW-0472">Membrane</keyword>
<keyword id="KW-0564">Palmitate</keyword>
<keyword id="KW-1185">Reference proteome</keyword>
<keyword id="KW-0732">Signal</keyword>
<gene>
    <name type="primary">ecnB</name>
    <name type="synonym">yjeU</name>
    <name type="ordered locus">b4411</name>
    <name type="ordered locus">JW4108</name>
</gene>
<accession>P0ADB7</accession>
<accession>P56549</accession>
<accession>Q2M6F5</accession>
<feature type="signal peptide" evidence="1">
    <location>
        <begin position="1"/>
        <end position="21"/>
    </location>
</feature>
<feature type="peptide" id="PRO_0000018170" description="Entericidin B">
    <location>
        <begin position="22"/>
        <end position="48"/>
    </location>
</feature>
<feature type="lipid moiety-binding region" description="N-palmitoyl cysteine" evidence="2">
    <location>
        <position position="22"/>
    </location>
</feature>
<feature type="lipid moiety-binding region" description="S-diacylglycerol cysteine" evidence="2">
    <location>
        <position position="22"/>
    </location>
</feature>
<reference key="1">
    <citation type="journal article" date="1998" name="J. Mol. Biol.">
        <title>The entericidin locus of Escherichia coli and its implications for programmed bacterial cell death.</title>
        <authorList>
            <person name="Bishop R.E."/>
            <person name="Leskiw B.K."/>
            <person name="Hodges R.S."/>
            <person name="Kay C.M."/>
            <person name="Weiner J.H."/>
        </authorList>
    </citation>
    <scope>NUCLEOTIDE SEQUENCE [GENOMIC DNA]</scope>
    <source>
        <strain>K12 / CS520</strain>
    </source>
</reference>
<reference key="2">
    <citation type="journal article" date="1995" name="Nucleic Acids Res.">
        <title>Analysis of the Escherichia coli genome VI: DNA sequence of the region from 92.8 through 100 minutes.</title>
        <authorList>
            <person name="Burland V.D."/>
            <person name="Plunkett G. III"/>
            <person name="Sofia H.J."/>
            <person name="Daniels D.L."/>
            <person name="Blattner F.R."/>
        </authorList>
    </citation>
    <scope>NUCLEOTIDE SEQUENCE [LARGE SCALE GENOMIC DNA]</scope>
    <source>
        <strain>K12 / MG1655 / ATCC 47076</strain>
    </source>
</reference>
<reference key="3">
    <citation type="journal article" date="1997" name="Science">
        <title>The complete genome sequence of Escherichia coli K-12.</title>
        <authorList>
            <person name="Blattner F.R."/>
            <person name="Plunkett G. III"/>
            <person name="Bloch C.A."/>
            <person name="Perna N.T."/>
            <person name="Burland V."/>
            <person name="Riley M."/>
            <person name="Collado-Vides J."/>
            <person name="Glasner J.D."/>
            <person name="Rode C.K."/>
            <person name="Mayhew G.F."/>
            <person name="Gregor J."/>
            <person name="Davis N.W."/>
            <person name="Kirkpatrick H.A."/>
            <person name="Goeden M.A."/>
            <person name="Rose D.J."/>
            <person name="Mau B."/>
            <person name="Shao Y."/>
        </authorList>
    </citation>
    <scope>NUCLEOTIDE SEQUENCE [LARGE SCALE GENOMIC DNA]</scope>
    <source>
        <strain>K12 / MG1655 / ATCC 47076</strain>
    </source>
</reference>
<reference key="4">
    <citation type="journal article" date="2006" name="Mol. Syst. Biol.">
        <title>Highly accurate genome sequences of Escherichia coli K-12 strains MG1655 and W3110.</title>
        <authorList>
            <person name="Hayashi K."/>
            <person name="Morooka N."/>
            <person name="Yamamoto Y."/>
            <person name="Fujita K."/>
            <person name="Isono K."/>
            <person name="Choi S."/>
            <person name="Ohtsubo E."/>
            <person name="Baba T."/>
            <person name="Wanner B.L."/>
            <person name="Mori H."/>
            <person name="Horiuchi T."/>
        </authorList>
    </citation>
    <scope>NUCLEOTIDE SEQUENCE [LARGE SCALE GENOMIC DNA]</scope>
    <source>
        <strain>K12 / W3110 / ATCC 27325 / DSM 5911</strain>
    </source>
</reference>
<sequence length="48" mass="4810">MVKKTIAAIFSVLVLSTVLTACNTTRGVGEDISDGGNAISGAATKAQQ</sequence>
<dbReference type="EMBL" id="U21726">
    <property type="protein sequence ID" value="AAC46454.1"/>
    <property type="molecule type" value="Genomic_DNA"/>
</dbReference>
<dbReference type="EMBL" id="U14003">
    <property type="status" value="NOT_ANNOTATED_CDS"/>
    <property type="molecule type" value="Genomic_DNA"/>
</dbReference>
<dbReference type="EMBL" id="U00096">
    <property type="protein sequence ID" value="AAT48242.1"/>
    <property type="molecule type" value="Genomic_DNA"/>
</dbReference>
<dbReference type="EMBL" id="AP009048">
    <property type="protein sequence ID" value="BAE78151.1"/>
    <property type="molecule type" value="Genomic_DNA"/>
</dbReference>
<dbReference type="RefSeq" id="WP_000239596.1">
    <property type="nucleotide sequence ID" value="NZ_STEB01000014.1"/>
</dbReference>
<dbReference type="RefSeq" id="YP_026284.1">
    <property type="nucleotide sequence ID" value="NC_000913.3"/>
</dbReference>
<dbReference type="BioGRID" id="4261133">
    <property type="interactions" value="134"/>
</dbReference>
<dbReference type="FunCoup" id="P0ADB7">
    <property type="interactions" value="87"/>
</dbReference>
<dbReference type="STRING" id="511145.b4411"/>
<dbReference type="TCDB" id="9.B.13.1.1">
    <property type="family name" value="the putative pore-forming entericidin (ecn) family"/>
</dbReference>
<dbReference type="jPOST" id="P0ADB7"/>
<dbReference type="PaxDb" id="511145-b4411"/>
<dbReference type="EnsemblBacteria" id="AAT48242">
    <property type="protein sequence ID" value="AAT48242"/>
    <property type="gene ID" value="b4411"/>
</dbReference>
<dbReference type="GeneID" id="2847737"/>
<dbReference type="GeneID" id="93777675"/>
<dbReference type="KEGG" id="ecj:JW4108"/>
<dbReference type="KEGG" id="eco:b4411"/>
<dbReference type="KEGG" id="ecoc:C3026_22420"/>
<dbReference type="PATRIC" id="fig|1411691.4.peg.2551"/>
<dbReference type="EchoBASE" id="EB4091"/>
<dbReference type="eggNOG" id="COG5510">
    <property type="taxonomic scope" value="Bacteria"/>
</dbReference>
<dbReference type="HOGENOM" id="CLU_193827_2_0_6"/>
<dbReference type="InParanoid" id="P0ADB7"/>
<dbReference type="OrthoDB" id="9181810at2"/>
<dbReference type="PhylomeDB" id="P0ADB7"/>
<dbReference type="BioCyc" id="EcoCyc:MONOMER0-1563"/>
<dbReference type="PRO" id="PR:P0ADB7"/>
<dbReference type="Proteomes" id="UP000000625">
    <property type="component" value="Chromosome"/>
</dbReference>
<dbReference type="GO" id="GO:0016020">
    <property type="term" value="C:membrane"/>
    <property type="evidence" value="ECO:0000314"/>
    <property type="project" value="EcoCyc"/>
</dbReference>
<dbReference type="GO" id="GO:0005886">
    <property type="term" value="C:plasma membrane"/>
    <property type="evidence" value="ECO:0007669"/>
    <property type="project" value="UniProtKB-SubCell"/>
</dbReference>
<dbReference type="GO" id="GO:0009636">
    <property type="term" value="P:response to toxic substance"/>
    <property type="evidence" value="ECO:0007669"/>
    <property type="project" value="InterPro"/>
</dbReference>
<dbReference type="InterPro" id="IPR012556">
    <property type="entry name" value="Entericidin"/>
</dbReference>
<dbReference type="NCBIfam" id="NF007487">
    <property type="entry name" value="PRK10081.1"/>
    <property type="match status" value="1"/>
</dbReference>
<dbReference type="Pfam" id="PF08085">
    <property type="entry name" value="Entericidin"/>
    <property type="match status" value="1"/>
</dbReference>
<dbReference type="PROSITE" id="PS51257">
    <property type="entry name" value="PROKAR_LIPOPROTEIN"/>
    <property type="match status" value="1"/>
</dbReference>